<protein>
    <recommendedName>
        <fullName evidence="8">Distal membrane arm assembly component 2</fullName>
    </recommendedName>
    <alternativeName>
        <fullName evidence="1">ATP synthase subunit s-like protein</fullName>
        <shortName evidence="3">dATP5SL</shortName>
    </alternativeName>
</protein>
<dbReference type="EMBL" id="AE014296">
    <property type="protein sequence ID" value="AAF51634.1"/>
    <property type="molecule type" value="Genomic_DNA"/>
</dbReference>
<dbReference type="EMBL" id="AE014296">
    <property type="protein sequence ID" value="AGB94814.1"/>
    <property type="molecule type" value="Genomic_DNA"/>
</dbReference>
<dbReference type="EMBL" id="AY071495">
    <property type="protein sequence ID" value="AAL49117.1"/>
    <property type="molecule type" value="mRNA"/>
</dbReference>
<dbReference type="EMBL" id="BT044316">
    <property type="protein sequence ID" value="ACH92381.1"/>
    <property type="molecule type" value="mRNA"/>
</dbReference>
<dbReference type="RefSeq" id="NP_001262121.1">
    <property type="nucleotide sequence ID" value="NM_001275192.1"/>
</dbReference>
<dbReference type="RefSeq" id="NP_649250.2">
    <property type="nucleotide sequence ID" value="NM_140993.4"/>
</dbReference>
<dbReference type="SMR" id="Q9VPC1"/>
<dbReference type="FunCoup" id="Q9VPC1">
    <property type="interactions" value="992"/>
</dbReference>
<dbReference type="IntAct" id="Q9VPC1">
    <property type="interactions" value="4"/>
</dbReference>
<dbReference type="STRING" id="7227.FBpp0302832"/>
<dbReference type="PaxDb" id="7227-FBpp0302832"/>
<dbReference type="DNASU" id="40291"/>
<dbReference type="EnsemblMetazoa" id="FBtr0078279">
    <property type="protein sequence ID" value="FBpp0077937"/>
    <property type="gene ID" value="FBgn0037018"/>
</dbReference>
<dbReference type="EnsemblMetazoa" id="FBtr0321286">
    <property type="protein sequence ID" value="FBpp0302832"/>
    <property type="gene ID" value="FBgn0037018"/>
</dbReference>
<dbReference type="GeneID" id="40291"/>
<dbReference type="KEGG" id="dme:Dmel_CG4042"/>
<dbReference type="UCSC" id="CG4042-RA">
    <property type="organism name" value="d. melanogaster"/>
</dbReference>
<dbReference type="AGR" id="FB:FBgn0037018"/>
<dbReference type="FlyBase" id="FBgn0037018">
    <property type="gene designation" value="Dmac2"/>
</dbReference>
<dbReference type="VEuPathDB" id="VectorBase:FBgn0037018"/>
<dbReference type="eggNOG" id="KOG3864">
    <property type="taxonomic scope" value="Eukaryota"/>
</dbReference>
<dbReference type="GeneTree" id="ENSGT00940000160500"/>
<dbReference type="HOGENOM" id="CLU_085848_0_0_1"/>
<dbReference type="InParanoid" id="Q9VPC1"/>
<dbReference type="OMA" id="VWCLDRI"/>
<dbReference type="OrthoDB" id="1708588at2759"/>
<dbReference type="BioGRID-ORCS" id="40291">
    <property type="hits" value="0 hits in 1 CRISPR screen"/>
</dbReference>
<dbReference type="Proteomes" id="UP000000803">
    <property type="component" value="Chromosome 3L"/>
</dbReference>
<dbReference type="Bgee" id="FBgn0037018">
    <property type="expression patterns" value="Expressed in spermatocyte in testis and 77 other cell types or tissues"/>
</dbReference>
<dbReference type="ExpressionAtlas" id="Q9VPC1">
    <property type="expression patterns" value="baseline and differential"/>
</dbReference>
<dbReference type="GO" id="GO:0005739">
    <property type="term" value="C:mitochondrion"/>
    <property type="evidence" value="ECO:0000314"/>
    <property type="project" value="FlyBase"/>
</dbReference>
<dbReference type="GO" id="GO:0032981">
    <property type="term" value="P:mitochondrial respiratory chain complex I assembly"/>
    <property type="evidence" value="ECO:0000250"/>
    <property type="project" value="FlyBase"/>
</dbReference>
<dbReference type="FunFam" id="3.80.10.10:FF:000168">
    <property type="entry name" value="Distal membrane arm assembly complex 2"/>
    <property type="match status" value="1"/>
</dbReference>
<dbReference type="Gene3D" id="3.80.10.10">
    <property type="entry name" value="Ribonuclease Inhibitor"/>
    <property type="match status" value="1"/>
</dbReference>
<dbReference type="InterPro" id="IPR032675">
    <property type="entry name" value="LRR_dom_sf"/>
</dbReference>
<dbReference type="SUPFAM" id="SSF52047">
    <property type="entry name" value="RNI-like"/>
    <property type="match status" value="1"/>
</dbReference>
<gene>
    <name evidence="8" type="primary">Dmac2</name>
    <name evidence="8" type="ORF">CG4042</name>
</gene>
<keyword id="KW-1185">Reference proteome</keyword>
<sequence length="284" mass="32894">MLQRVSRRFPSLRRCGLRTASTVPTNQAQPGEVEEEVSATVKRIRSELAADKQKLKWRTPIGDRPEDWNSKLKLFSNAEQTSDFIVMMQKPIDLSPRNIRQWWENREERIERHMQQFVPERHKILGAELAAAHFILYRGGAVKFINDTHWRRASKDGEFKLPNKFDPRYKVEALRCDNMELYYEGLENLRCLDSLKFLSFHNVKSFDDWCLDRISGGGFPNLEVLDLSCTQITSNGLACLYRFPKLKLLILNDPKETLELELSTVMLEEAMPALKIVGADAIHS</sequence>
<comment type="function">
    <text evidence="5">Involved in the assembly of the mitochondrial membrane respiratory chain NADH dehydrogenase (Complex I).</text>
</comment>
<comment type="subunit">
    <text evidence="2">Associates with mitochondrial complex I assembly intermediates during its biogenesis.</text>
</comment>
<comment type="similarity">
    <text evidence="4">Belongs to the ATP synthase subunit s family.</text>
</comment>
<evidence type="ECO:0000250" key="1">
    <source>
        <dbReference type="UniProtKB" id="Q9NW81"/>
    </source>
</evidence>
<evidence type="ECO:0000269" key="2">
    <source>
    </source>
</evidence>
<evidence type="ECO:0000303" key="3">
    <source>
    </source>
</evidence>
<evidence type="ECO:0000305" key="4"/>
<evidence type="ECO:0000305" key="5">
    <source>
    </source>
</evidence>
<evidence type="ECO:0000312" key="6">
    <source>
        <dbReference type="EMBL" id="AAL49117.1"/>
    </source>
</evidence>
<evidence type="ECO:0000312" key="7">
    <source>
        <dbReference type="EMBL" id="ACH92381.1"/>
    </source>
</evidence>
<evidence type="ECO:0000312" key="8">
    <source>
        <dbReference type="FlyBase" id="FBgn0037018"/>
    </source>
</evidence>
<evidence type="ECO:0000312" key="9">
    <source>
        <dbReference type="Proteomes" id="UP000000803"/>
    </source>
</evidence>
<organism evidence="9">
    <name type="scientific">Drosophila melanogaster</name>
    <name type="common">Fruit fly</name>
    <dbReference type="NCBI Taxonomy" id="7227"/>
    <lineage>
        <taxon>Eukaryota</taxon>
        <taxon>Metazoa</taxon>
        <taxon>Ecdysozoa</taxon>
        <taxon>Arthropoda</taxon>
        <taxon>Hexapoda</taxon>
        <taxon>Insecta</taxon>
        <taxon>Pterygota</taxon>
        <taxon>Neoptera</taxon>
        <taxon>Endopterygota</taxon>
        <taxon>Diptera</taxon>
        <taxon>Brachycera</taxon>
        <taxon>Muscomorpha</taxon>
        <taxon>Ephydroidea</taxon>
        <taxon>Drosophilidae</taxon>
        <taxon>Drosophila</taxon>
        <taxon>Sophophora</taxon>
    </lineage>
</organism>
<proteinExistence type="evidence at protein level"/>
<feature type="chain" id="PRO_0000461813" description="Distal membrane arm assembly component 2">
    <location>
        <begin position="1"/>
        <end position="284"/>
    </location>
</feature>
<feature type="sequence conflict" description="In Ref. 3; AAL49117." evidence="4" ref="3">
    <original>G</original>
    <variation>E</variation>
    <location>
        <position position="185"/>
    </location>
</feature>
<reference evidence="9" key="1">
    <citation type="journal article" date="2000" name="Science">
        <title>The genome sequence of Drosophila melanogaster.</title>
        <authorList>
            <person name="Adams M.D."/>
            <person name="Celniker S.E."/>
            <person name="Holt R.A."/>
            <person name="Evans C.A."/>
            <person name="Gocayne J.D."/>
            <person name="Amanatides P.G."/>
            <person name="Scherer S.E."/>
            <person name="Li P.W."/>
            <person name="Hoskins R.A."/>
            <person name="Galle R.F."/>
            <person name="George R.A."/>
            <person name="Lewis S.E."/>
            <person name="Richards S."/>
            <person name="Ashburner M."/>
            <person name="Henderson S.N."/>
            <person name="Sutton G.G."/>
            <person name="Wortman J.R."/>
            <person name="Yandell M.D."/>
            <person name="Zhang Q."/>
            <person name="Chen L.X."/>
            <person name="Brandon R.C."/>
            <person name="Rogers Y.-H.C."/>
            <person name="Blazej R.G."/>
            <person name="Champe M."/>
            <person name="Pfeiffer B.D."/>
            <person name="Wan K.H."/>
            <person name="Doyle C."/>
            <person name="Baxter E.G."/>
            <person name="Helt G."/>
            <person name="Nelson C.R."/>
            <person name="Miklos G.L.G."/>
            <person name="Abril J.F."/>
            <person name="Agbayani A."/>
            <person name="An H.-J."/>
            <person name="Andrews-Pfannkoch C."/>
            <person name="Baldwin D."/>
            <person name="Ballew R.M."/>
            <person name="Basu A."/>
            <person name="Baxendale J."/>
            <person name="Bayraktaroglu L."/>
            <person name="Beasley E.M."/>
            <person name="Beeson K.Y."/>
            <person name="Benos P.V."/>
            <person name="Berman B.P."/>
            <person name="Bhandari D."/>
            <person name="Bolshakov S."/>
            <person name="Borkova D."/>
            <person name="Botchan M.R."/>
            <person name="Bouck J."/>
            <person name="Brokstein P."/>
            <person name="Brottier P."/>
            <person name="Burtis K.C."/>
            <person name="Busam D.A."/>
            <person name="Butler H."/>
            <person name="Cadieu E."/>
            <person name="Center A."/>
            <person name="Chandra I."/>
            <person name="Cherry J.M."/>
            <person name="Cawley S."/>
            <person name="Dahlke C."/>
            <person name="Davenport L.B."/>
            <person name="Davies P."/>
            <person name="de Pablos B."/>
            <person name="Delcher A."/>
            <person name="Deng Z."/>
            <person name="Mays A.D."/>
            <person name="Dew I."/>
            <person name="Dietz S.M."/>
            <person name="Dodson K."/>
            <person name="Doup L.E."/>
            <person name="Downes M."/>
            <person name="Dugan-Rocha S."/>
            <person name="Dunkov B.C."/>
            <person name="Dunn P."/>
            <person name="Durbin K.J."/>
            <person name="Evangelista C.C."/>
            <person name="Ferraz C."/>
            <person name="Ferriera S."/>
            <person name="Fleischmann W."/>
            <person name="Fosler C."/>
            <person name="Gabrielian A.E."/>
            <person name="Garg N.S."/>
            <person name="Gelbart W.M."/>
            <person name="Glasser K."/>
            <person name="Glodek A."/>
            <person name="Gong F."/>
            <person name="Gorrell J.H."/>
            <person name="Gu Z."/>
            <person name="Guan P."/>
            <person name="Harris M."/>
            <person name="Harris N.L."/>
            <person name="Harvey D.A."/>
            <person name="Heiman T.J."/>
            <person name="Hernandez J.R."/>
            <person name="Houck J."/>
            <person name="Hostin D."/>
            <person name="Houston K.A."/>
            <person name="Howland T.J."/>
            <person name="Wei M.-H."/>
            <person name="Ibegwam C."/>
            <person name="Jalali M."/>
            <person name="Kalush F."/>
            <person name="Karpen G.H."/>
            <person name="Ke Z."/>
            <person name="Kennison J.A."/>
            <person name="Ketchum K.A."/>
            <person name="Kimmel B.E."/>
            <person name="Kodira C.D."/>
            <person name="Kraft C.L."/>
            <person name="Kravitz S."/>
            <person name="Kulp D."/>
            <person name="Lai Z."/>
            <person name="Lasko P."/>
            <person name="Lei Y."/>
            <person name="Levitsky A.A."/>
            <person name="Li J.H."/>
            <person name="Li Z."/>
            <person name="Liang Y."/>
            <person name="Lin X."/>
            <person name="Liu X."/>
            <person name="Mattei B."/>
            <person name="McIntosh T.C."/>
            <person name="McLeod M.P."/>
            <person name="McPherson D."/>
            <person name="Merkulov G."/>
            <person name="Milshina N.V."/>
            <person name="Mobarry C."/>
            <person name="Morris J."/>
            <person name="Moshrefi A."/>
            <person name="Mount S.M."/>
            <person name="Moy M."/>
            <person name="Murphy B."/>
            <person name="Murphy L."/>
            <person name="Muzny D.M."/>
            <person name="Nelson D.L."/>
            <person name="Nelson D.R."/>
            <person name="Nelson K.A."/>
            <person name="Nixon K."/>
            <person name="Nusskern D.R."/>
            <person name="Pacleb J.M."/>
            <person name="Palazzolo M."/>
            <person name="Pittman G.S."/>
            <person name="Pan S."/>
            <person name="Pollard J."/>
            <person name="Puri V."/>
            <person name="Reese M.G."/>
            <person name="Reinert K."/>
            <person name="Remington K."/>
            <person name="Saunders R.D.C."/>
            <person name="Scheeler F."/>
            <person name="Shen H."/>
            <person name="Shue B.C."/>
            <person name="Siden-Kiamos I."/>
            <person name="Simpson M."/>
            <person name="Skupski M.P."/>
            <person name="Smith T.J."/>
            <person name="Spier E."/>
            <person name="Spradling A.C."/>
            <person name="Stapleton M."/>
            <person name="Strong R."/>
            <person name="Sun E."/>
            <person name="Svirskas R."/>
            <person name="Tector C."/>
            <person name="Turner R."/>
            <person name="Venter E."/>
            <person name="Wang A.H."/>
            <person name="Wang X."/>
            <person name="Wang Z.-Y."/>
            <person name="Wassarman D.A."/>
            <person name="Weinstock G.M."/>
            <person name="Weissenbach J."/>
            <person name="Williams S.M."/>
            <person name="Woodage T."/>
            <person name="Worley K.C."/>
            <person name="Wu D."/>
            <person name="Yang S."/>
            <person name="Yao Q.A."/>
            <person name="Ye J."/>
            <person name="Yeh R.-F."/>
            <person name="Zaveri J.S."/>
            <person name="Zhan M."/>
            <person name="Zhang G."/>
            <person name="Zhao Q."/>
            <person name="Zheng L."/>
            <person name="Zheng X.H."/>
            <person name="Zhong F.N."/>
            <person name="Zhong W."/>
            <person name="Zhou X."/>
            <person name="Zhu S.C."/>
            <person name="Zhu X."/>
            <person name="Smith H.O."/>
            <person name="Gibbs R.A."/>
            <person name="Myers E.W."/>
            <person name="Rubin G.M."/>
            <person name="Venter J.C."/>
        </authorList>
    </citation>
    <scope>NUCLEOTIDE SEQUENCE [LARGE SCALE GENOMIC DNA]</scope>
    <source>
        <strain evidence="9">Berkeley</strain>
    </source>
</reference>
<reference evidence="9" key="2">
    <citation type="journal article" date="2002" name="Genome Biol.">
        <title>Annotation of the Drosophila melanogaster euchromatic genome: a systematic review.</title>
        <authorList>
            <person name="Misra S."/>
            <person name="Crosby M.A."/>
            <person name="Mungall C.J."/>
            <person name="Matthews B.B."/>
            <person name="Campbell K.S."/>
            <person name="Hradecky P."/>
            <person name="Huang Y."/>
            <person name="Kaminker J.S."/>
            <person name="Millburn G.H."/>
            <person name="Prochnik S.E."/>
            <person name="Smith C.D."/>
            <person name="Tupy J.L."/>
            <person name="Whitfield E.J."/>
            <person name="Bayraktaroglu L."/>
            <person name="Berman B.P."/>
            <person name="Bettencourt B.R."/>
            <person name="Celniker S.E."/>
            <person name="de Grey A.D.N.J."/>
            <person name="Drysdale R.A."/>
            <person name="Harris N.L."/>
            <person name="Richter J."/>
            <person name="Russo S."/>
            <person name="Schroeder A.J."/>
            <person name="Shu S.Q."/>
            <person name="Stapleton M."/>
            <person name="Yamada C."/>
            <person name="Ashburner M."/>
            <person name="Gelbart W.M."/>
            <person name="Rubin G.M."/>
            <person name="Lewis S.E."/>
        </authorList>
    </citation>
    <scope>GENOME REANNOTATION</scope>
    <source>
        <strain evidence="9">Berkeley</strain>
    </source>
</reference>
<reference evidence="6" key="3">
    <citation type="journal article" date="2002" name="Genome Biol.">
        <title>A Drosophila full-length cDNA resource.</title>
        <authorList>
            <person name="Stapleton M."/>
            <person name="Carlson J.W."/>
            <person name="Brokstein P."/>
            <person name="Yu C."/>
            <person name="Champe M."/>
            <person name="George R.A."/>
            <person name="Guarin H."/>
            <person name="Kronmiller B."/>
            <person name="Pacleb J.M."/>
            <person name="Park S."/>
            <person name="Wan K.H."/>
            <person name="Rubin G.M."/>
            <person name="Celniker S.E."/>
        </authorList>
    </citation>
    <scope>NUCLEOTIDE SEQUENCE [LARGE SCALE MRNA]</scope>
    <source>
        <strain evidence="6">Berkeley</strain>
        <tissue evidence="6">Embryo</tissue>
    </source>
</reference>
<reference evidence="7" key="4">
    <citation type="submission" date="2008-09" db="EMBL/GenBank/DDBJ databases">
        <authorList>
            <person name="Carlson J."/>
            <person name="Booth B."/>
            <person name="Frise E."/>
            <person name="Park S."/>
            <person name="Wan K."/>
            <person name="Yu C."/>
            <person name="Celniker S."/>
        </authorList>
    </citation>
    <scope>NUCLEOTIDE SEQUENCE [LARGE SCALE MRNA]</scope>
</reference>
<reference evidence="4" key="5">
    <citation type="journal article" date="2021" name="IScience">
        <title>Dissecting the concordant and disparate roles of NDUFAF3 and NDUFAF4 in mitochondrial complex I biogenesis.</title>
        <authorList>
            <person name="Murari A."/>
            <person name="Rhooms S.K."/>
            <person name="Garcia C."/>
            <person name="Liu T."/>
            <person name="Li H."/>
            <person name="Mishra B."/>
            <person name="Deshong C."/>
            <person name="Owusu-Ansah E."/>
        </authorList>
    </citation>
    <scope>FUNCTION</scope>
    <scope>INTERACTION WITH COMPLEX 1</scope>
</reference>
<name>DMAC2_DROME</name>
<accession>Q9VPC1</accession>
<accession>Q8SYK3</accession>